<organism>
    <name type="scientific">Homo sapiens</name>
    <name type="common">Human</name>
    <dbReference type="NCBI Taxonomy" id="9606"/>
    <lineage>
        <taxon>Eukaryota</taxon>
        <taxon>Metazoa</taxon>
        <taxon>Chordata</taxon>
        <taxon>Craniata</taxon>
        <taxon>Vertebrata</taxon>
        <taxon>Euteleostomi</taxon>
        <taxon>Mammalia</taxon>
        <taxon>Eutheria</taxon>
        <taxon>Euarchontoglires</taxon>
        <taxon>Primates</taxon>
        <taxon>Haplorrhini</taxon>
        <taxon>Catarrhini</taxon>
        <taxon>Hominidae</taxon>
        <taxon>Homo</taxon>
    </lineage>
</organism>
<keyword id="KW-0002">3D-structure</keyword>
<keyword id="KW-0007">Acetylation</keyword>
<keyword id="KW-0025">Alternative splicing</keyword>
<keyword id="KW-0032">Aminotransferase</keyword>
<keyword id="KW-0225">Disease variant</keyword>
<keyword id="KW-0991">Intellectual disability</keyword>
<keyword id="KW-1267">Proteomics identification</keyword>
<keyword id="KW-0663">Pyridoxal phosphate</keyword>
<keyword id="KW-1185">Reference proteome</keyword>
<keyword id="KW-0808">Transferase</keyword>
<name>ALAT2_HUMAN</name>
<evidence type="ECO:0000250" key="1"/>
<evidence type="ECO:0000250" key="2">
    <source>
        <dbReference type="UniProtKB" id="Q8BGT5"/>
    </source>
</evidence>
<evidence type="ECO:0000256" key="3">
    <source>
        <dbReference type="SAM" id="MobiDB-lite"/>
    </source>
</evidence>
<evidence type="ECO:0000269" key="4">
    <source>
    </source>
</evidence>
<evidence type="ECO:0000269" key="5">
    <source>
    </source>
</evidence>
<evidence type="ECO:0000269" key="6">
    <source ref="7"/>
</evidence>
<evidence type="ECO:0000303" key="7">
    <source>
    </source>
</evidence>
<evidence type="ECO:0000305" key="8"/>
<evidence type="ECO:0007744" key="9">
    <source>
        <dbReference type="PDB" id="3IHJ"/>
    </source>
</evidence>
<evidence type="ECO:0007829" key="10">
    <source>
        <dbReference type="PDB" id="3IHJ"/>
    </source>
</evidence>
<dbReference type="EC" id="2.6.1.2"/>
<dbReference type="EMBL" id="AY029173">
    <property type="protein sequence ID" value="AAK31794.2"/>
    <property type="molecule type" value="mRNA"/>
</dbReference>
<dbReference type="EMBL" id="AK094971">
    <property type="protein sequence ID" value="BAC04465.1"/>
    <property type="molecule type" value="mRNA"/>
</dbReference>
<dbReference type="EMBL" id="AC018845">
    <property type="status" value="NOT_ANNOTATED_CDS"/>
    <property type="molecule type" value="Genomic_DNA"/>
</dbReference>
<dbReference type="EMBL" id="BC062555">
    <property type="protein sequence ID" value="AAH62555.1"/>
    <property type="molecule type" value="mRNA"/>
</dbReference>
<dbReference type="CCDS" id="CCDS10725.1">
    <molecule id="Q8TD30-1"/>
</dbReference>
<dbReference type="CCDS" id="CCDS45478.1">
    <molecule id="Q8TD30-2"/>
</dbReference>
<dbReference type="RefSeq" id="NP_001135938.1">
    <molecule id="Q8TD30-2"/>
    <property type="nucleotide sequence ID" value="NM_001142466.3"/>
</dbReference>
<dbReference type="RefSeq" id="NP_597700.1">
    <molecule id="Q8TD30-1"/>
    <property type="nucleotide sequence ID" value="NM_133443.4"/>
</dbReference>
<dbReference type="RefSeq" id="XP_047290771.1">
    <molecule id="Q8TD30-2"/>
    <property type="nucleotide sequence ID" value="XM_047434815.1"/>
</dbReference>
<dbReference type="RefSeq" id="XP_054170180.1">
    <molecule id="Q8TD30-2"/>
    <property type="nucleotide sequence ID" value="XM_054314205.1"/>
</dbReference>
<dbReference type="RefSeq" id="XP_054170181.1">
    <molecule id="Q8TD30-2"/>
    <property type="nucleotide sequence ID" value="XM_054314206.1"/>
</dbReference>
<dbReference type="PDB" id="3IHJ">
    <property type="method" value="X-ray"/>
    <property type="resolution" value="2.30 A"/>
    <property type="chains" value="A=49-523"/>
</dbReference>
<dbReference type="PDBsum" id="3IHJ"/>
<dbReference type="SMR" id="Q8TD30"/>
<dbReference type="BioGRID" id="124217">
    <property type="interactions" value="37"/>
</dbReference>
<dbReference type="FunCoup" id="Q8TD30">
    <property type="interactions" value="993"/>
</dbReference>
<dbReference type="IntAct" id="Q8TD30">
    <property type="interactions" value="18"/>
</dbReference>
<dbReference type="MINT" id="Q8TD30"/>
<dbReference type="STRING" id="9606.ENSP00000345282"/>
<dbReference type="DrugBank" id="DB00160">
    <property type="generic name" value="Alanine"/>
</dbReference>
<dbReference type="DrugBank" id="DB00142">
    <property type="generic name" value="Glutamic acid"/>
</dbReference>
<dbReference type="DrugBank" id="DB00780">
    <property type="generic name" value="Phenelzine"/>
</dbReference>
<dbReference type="DrugBank" id="DB00114">
    <property type="generic name" value="Pyridoxal phosphate"/>
</dbReference>
<dbReference type="GlyGen" id="Q8TD30">
    <property type="glycosylation" value="1 site, 1 O-linked glycan (1 site)"/>
</dbReference>
<dbReference type="iPTMnet" id="Q8TD30"/>
<dbReference type="PhosphoSitePlus" id="Q8TD30"/>
<dbReference type="SwissPalm" id="Q8TD30"/>
<dbReference type="BioMuta" id="GPT2"/>
<dbReference type="DMDM" id="74730602"/>
<dbReference type="jPOST" id="Q8TD30"/>
<dbReference type="MassIVE" id="Q8TD30"/>
<dbReference type="PaxDb" id="9606-ENSP00000345282"/>
<dbReference type="PeptideAtlas" id="Q8TD30"/>
<dbReference type="ProteomicsDB" id="74226">
    <molecule id="Q8TD30-1"/>
</dbReference>
<dbReference type="ProteomicsDB" id="74227">
    <molecule id="Q8TD30-2"/>
</dbReference>
<dbReference type="Pumba" id="Q8TD30"/>
<dbReference type="Antibodypedia" id="28066">
    <property type="antibodies" value="231 antibodies from 28 providers"/>
</dbReference>
<dbReference type="DNASU" id="84706"/>
<dbReference type="Ensembl" id="ENST00000340124.9">
    <molecule id="Q8TD30-1"/>
    <property type="protein sequence ID" value="ENSP00000345282.4"/>
    <property type="gene ID" value="ENSG00000166123.14"/>
</dbReference>
<dbReference type="Ensembl" id="ENST00000440783.2">
    <molecule id="Q8TD30-2"/>
    <property type="protein sequence ID" value="ENSP00000413804.2"/>
    <property type="gene ID" value="ENSG00000166123.14"/>
</dbReference>
<dbReference type="GeneID" id="84706"/>
<dbReference type="KEGG" id="hsa:84706"/>
<dbReference type="MANE-Select" id="ENST00000340124.9">
    <property type="protein sequence ID" value="ENSP00000345282.4"/>
    <property type="RefSeq nucleotide sequence ID" value="NM_133443.4"/>
    <property type="RefSeq protein sequence ID" value="NP_597700.1"/>
</dbReference>
<dbReference type="UCSC" id="uc002eel.4">
    <molecule id="Q8TD30-1"/>
    <property type="organism name" value="human"/>
</dbReference>
<dbReference type="AGR" id="HGNC:18062"/>
<dbReference type="CTD" id="84706"/>
<dbReference type="DisGeNET" id="84706"/>
<dbReference type="GeneCards" id="GPT2"/>
<dbReference type="HGNC" id="HGNC:18062">
    <property type="gene designation" value="GPT2"/>
</dbReference>
<dbReference type="HPA" id="ENSG00000166123">
    <property type="expression patterns" value="Tissue enhanced (pancreas, skeletal muscle, tongue)"/>
</dbReference>
<dbReference type="MalaCards" id="GPT2"/>
<dbReference type="MIM" id="138210">
    <property type="type" value="gene"/>
</dbReference>
<dbReference type="MIM" id="616281">
    <property type="type" value="phenotype"/>
</dbReference>
<dbReference type="neXtProt" id="NX_Q8TD30"/>
<dbReference type="OpenTargets" id="ENSG00000166123"/>
<dbReference type="Orphanet" id="477673">
    <property type="disease" value="Postnatal microcephaly-infantile hypotonia-spastic diplegia-dysarthria-intellectual disability syndrome"/>
</dbReference>
<dbReference type="PharmGKB" id="PA28948"/>
<dbReference type="VEuPathDB" id="HostDB:ENSG00000166123"/>
<dbReference type="eggNOG" id="KOG0258">
    <property type="taxonomic scope" value="Eukaryota"/>
</dbReference>
<dbReference type="GeneTree" id="ENSGT00940000159061"/>
<dbReference type="HOGENOM" id="CLU_014254_3_1_1"/>
<dbReference type="InParanoid" id="Q8TD30"/>
<dbReference type="OMA" id="EAETHGM"/>
<dbReference type="OrthoDB" id="1732682at2759"/>
<dbReference type="PAN-GO" id="Q8TD30">
    <property type="GO annotations" value="0 GO annotations based on evolutionary models"/>
</dbReference>
<dbReference type="PhylomeDB" id="Q8TD30"/>
<dbReference type="TreeFam" id="TF300839"/>
<dbReference type="BioCyc" id="MetaCyc:HS09332-MONOMER"/>
<dbReference type="PathwayCommons" id="Q8TD30"/>
<dbReference type="Reactome" id="R-HSA-8964540">
    <molecule id="Q8TD30-1"/>
    <property type="pathway name" value="Alanine metabolism"/>
</dbReference>
<dbReference type="SignaLink" id="Q8TD30"/>
<dbReference type="SIGNOR" id="Q8TD30"/>
<dbReference type="UniPathway" id="UPA00528">
    <property type="reaction ID" value="UER00586"/>
</dbReference>
<dbReference type="BioGRID-ORCS" id="84706">
    <property type="hits" value="14 hits in 1080 CRISPR screens"/>
</dbReference>
<dbReference type="ChiTaRS" id="GPT2">
    <property type="organism name" value="human"/>
</dbReference>
<dbReference type="EvolutionaryTrace" id="Q8TD30"/>
<dbReference type="GenomeRNAi" id="84706"/>
<dbReference type="Pharos" id="Q8TD30">
    <property type="development level" value="Tbio"/>
</dbReference>
<dbReference type="PRO" id="PR:Q8TD30"/>
<dbReference type="Proteomes" id="UP000005640">
    <property type="component" value="Chromosome 16"/>
</dbReference>
<dbReference type="RNAct" id="Q8TD30">
    <property type="molecule type" value="protein"/>
</dbReference>
<dbReference type="Bgee" id="ENSG00000166123">
    <property type="expression patterns" value="Expressed in lower esophagus mucosa and 170 other cell types or tissues"/>
</dbReference>
<dbReference type="ExpressionAtlas" id="Q8TD30">
    <property type="expression patterns" value="baseline and differential"/>
</dbReference>
<dbReference type="GO" id="GO:0005759">
    <property type="term" value="C:mitochondrial matrix"/>
    <property type="evidence" value="ECO:0000304"/>
    <property type="project" value="Reactome"/>
</dbReference>
<dbReference type="GO" id="GO:0005739">
    <property type="term" value="C:mitochondrion"/>
    <property type="evidence" value="ECO:0006056"/>
    <property type="project" value="FlyBase"/>
</dbReference>
<dbReference type="GO" id="GO:0004021">
    <property type="term" value="F:L-alanine:2-oxoglutarate aminotransferase activity"/>
    <property type="evidence" value="ECO:0000314"/>
    <property type="project" value="UniProtKB"/>
</dbReference>
<dbReference type="GO" id="GO:0030170">
    <property type="term" value="F:pyridoxal phosphate binding"/>
    <property type="evidence" value="ECO:0007669"/>
    <property type="project" value="InterPro"/>
</dbReference>
<dbReference type="GO" id="GO:0006103">
    <property type="term" value="P:2-oxoglutarate metabolic process"/>
    <property type="evidence" value="ECO:0000314"/>
    <property type="project" value="UniProtKB"/>
</dbReference>
<dbReference type="GO" id="GO:0009058">
    <property type="term" value="P:biosynthetic process"/>
    <property type="evidence" value="ECO:0007669"/>
    <property type="project" value="InterPro"/>
</dbReference>
<dbReference type="GO" id="GO:0042853">
    <property type="term" value="P:L-alanine catabolic process"/>
    <property type="evidence" value="ECO:0007669"/>
    <property type="project" value="UniProtKB-UniPathway"/>
</dbReference>
<dbReference type="GO" id="GO:0042851">
    <property type="term" value="P:L-alanine metabolic process"/>
    <property type="evidence" value="ECO:0000314"/>
    <property type="project" value="UniProtKB"/>
</dbReference>
<dbReference type="CDD" id="cd00609">
    <property type="entry name" value="AAT_like"/>
    <property type="match status" value="1"/>
</dbReference>
<dbReference type="FunFam" id="1.10.287.1970:FF:000001">
    <property type="entry name" value="Alanine aminotransferase 2"/>
    <property type="match status" value="1"/>
</dbReference>
<dbReference type="FunFam" id="3.40.640.10:FF:000226">
    <property type="entry name" value="Alanine aminotransferase 2"/>
    <property type="match status" value="1"/>
</dbReference>
<dbReference type="FunFam" id="3.90.1150.10:FF:000345">
    <property type="entry name" value="Alanine aminotransferase 2"/>
    <property type="match status" value="1"/>
</dbReference>
<dbReference type="Gene3D" id="1.10.287.1970">
    <property type="match status" value="1"/>
</dbReference>
<dbReference type="Gene3D" id="3.90.1150.10">
    <property type="entry name" value="Aspartate Aminotransferase, domain 1"/>
    <property type="match status" value="1"/>
</dbReference>
<dbReference type="Gene3D" id="3.40.640.10">
    <property type="entry name" value="Type I PLP-dependent aspartate aminotransferase-like (Major domain)"/>
    <property type="match status" value="1"/>
</dbReference>
<dbReference type="InterPro" id="IPR045088">
    <property type="entry name" value="ALAT1/2-like"/>
</dbReference>
<dbReference type="InterPro" id="IPR004839">
    <property type="entry name" value="Aminotransferase_I/II_large"/>
</dbReference>
<dbReference type="InterPro" id="IPR015424">
    <property type="entry name" value="PyrdxlP-dep_Trfase"/>
</dbReference>
<dbReference type="InterPro" id="IPR015421">
    <property type="entry name" value="PyrdxlP-dep_Trfase_major"/>
</dbReference>
<dbReference type="InterPro" id="IPR015422">
    <property type="entry name" value="PyrdxlP-dep_Trfase_small"/>
</dbReference>
<dbReference type="PANTHER" id="PTHR11751">
    <property type="entry name" value="ALANINE AMINOTRANSFERASE"/>
    <property type="match status" value="1"/>
</dbReference>
<dbReference type="PANTHER" id="PTHR11751:SF311">
    <property type="entry name" value="ALANINE AMINOTRANSFERASE 2"/>
    <property type="match status" value="1"/>
</dbReference>
<dbReference type="Pfam" id="PF00155">
    <property type="entry name" value="Aminotran_1_2"/>
    <property type="match status" value="1"/>
</dbReference>
<dbReference type="SUPFAM" id="SSF53383">
    <property type="entry name" value="PLP-dependent transferases"/>
    <property type="match status" value="1"/>
</dbReference>
<reference key="1">
    <citation type="journal article" date="2002" name="Genomics">
        <title>cDNA cloning, genomic structure, chromosomal mapping, and functional expression of a novel human alanine aminotransferase.</title>
        <authorList>
            <person name="Yang R.-Z."/>
            <person name="Blaileanu G."/>
            <person name="Hansen B.C."/>
            <person name="Shuldiner A.R."/>
            <person name="Gong D.-W."/>
        </authorList>
    </citation>
    <scope>NUCLEOTIDE SEQUENCE [MRNA] (ISOFORM 1)</scope>
    <scope>FUNCTION</scope>
    <scope>CATALYTIC ACTIVITY</scope>
    <scope>TISSUE SPECIFICITY</scope>
    <source>
        <tissue>Adipose tissue</tissue>
    </source>
</reference>
<reference key="2">
    <citation type="journal article" date="2004" name="Nat. Genet.">
        <title>Complete sequencing and characterization of 21,243 full-length human cDNAs.</title>
        <authorList>
            <person name="Ota T."/>
            <person name="Suzuki Y."/>
            <person name="Nishikawa T."/>
            <person name="Otsuki T."/>
            <person name="Sugiyama T."/>
            <person name="Irie R."/>
            <person name="Wakamatsu A."/>
            <person name="Hayashi K."/>
            <person name="Sato H."/>
            <person name="Nagai K."/>
            <person name="Kimura K."/>
            <person name="Makita H."/>
            <person name="Sekine M."/>
            <person name="Obayashi M."/>
            <person name="Nishi T."/>
            <person name="Shibahara T."/>
            <person name="Tanaka T."/>
            <person name="Ishii S."/>
            <person name="Yamamoto J."/>
            <person name="Saito K."/>
            <person name="Kawai Y."/>
            <person name="Isono Y."/>
            <person name="Nakamura Y."/>
            <person name="Nagahari K."/>
            <person name="Murakami K."/>
            <person name="Yasuda T."/>
            <person name="Iwayanagi T."/>
            <person name="Wagatsuma M."/>
            <person name="Shiratori A."/>
            <person name="Sudo H."/>
            <person name="Hosoiri T."/>
            <person name="Kaku Y."/>
            <person name="Kodaira H."/>
            <person name="Kondo H."/>
            <person name="Sugawara M."/>
            <person name="Takahashi M."/>
            <person name="Kanda K."/>
            <person name="Yokoi T."/>
            <person name="Furuya T."/>
            <person name="Kikkawa E."/>
            <person name="Omura Y."/>
            <person name="Abe K."/>
            <person name="Kamihara K."/>
            <person name="Katsuta N."/>
            <person name="Sato K."/>
            <person name="Tanikawa M."/>
            <person name="Yamazaki M."/>
            <person name="Ninomiya K."/>
            <person name="Ishibashi T."/>
            <person name="Yamashita H."/>
            <person name="Murakawa K."/>
            <person name="Fujimori K."/>
            <person name="Tanai H."/>
            <person name="Kimata M."/>
            <person name="Watanabe M."/>
            <person name="Hiraoka S."/>
            <person name="Chiba Y."/>
            <person name="Ishida S."/>
            <person name="Ono Y."/>
            <person name="Takiguchi S."/>
            <person name="Watanabe S."/>
            <person name="Yosida M."/>
            <person name="Hotuta T."/>
            <person name="Kusano J."/>
            <person name="Kanehori K."/>
            <person name="Takahashi-Fujii A."/>
            <person name="Hara H."/>
            <person name="Tanase T.-O."/>
            <person name="Nomura Y."/>
            <person name="Togiya S."/>
            <person name="Komai F."/>
            <person name="Hara R."/>
            <person name="Takeuchi K."/>
            <person name="Arita M."/>
            <person name="Imose N."/>
            <person name="Musashino K."/>
            <person name="Yuuki H."/>
            <person name="Oshima A."/>
            <person name="Sasaki N."/>
            <person name="Aotsuka S."/>
            <person name="Yoshikawa Y."/>
            <person name="Matsunawa H."/>
            <person name="Ichihara T."/>
            <person name="Shiohata N."/>
            <person name="Sano S."/>
            <person name="Moriya S."/>
            <person name="Momiyama H."/>
            <person name="Satoh N."/>
            <person name="Takami S."/>
            <person name="Terashima Y."/>
            <person name="Suzuki O."/>
            <person name="Nakagawa S."/>
            <person name="Senoh A."/>
            <person name="Mizoguchi H."/>
            <person name="Goto Y."/>
            <person name="Shimizu F."/>
            <person name="Wakebe H."/>
            <person name="Hishigaki H."/>
            <person name="Watanabe T."/>
            <person name="Sugiyama A."/>
            <person name="Takemoto M."/>
            <person name="Kawakami B."/>
            <person name="Yamazaki M."/>
            <person name="Watanabe K."/>
            <person name="Kumagai A."/>
            <person name="Itakura S."/>
            <person name="Fukuzumi Y."/>
            <person name="Fujimori Y."/>
            <person name="Komiyama M."/>
            <person name="Tashiro H."/>
            <person name="Tanigami A."/>
            <person name="Fujiwara T."/>
            <person name="Ono T."/>
            <person name="Yamada K."/>
            <person name="Fujii Y."/>
            <person name="Ozaki K."/>
            <person name="Hirao M."/>
            <person name="Ohmori Y."/>
            <person name="Kawabata A."/>
            <person name="Hikiji T."/>
            <person name="Kobatake N."/>
            <person name="Inagaki H."/>
            <person name="Ikema Y."/>
            <person name="Okamoto S."/>
            <person name="Okitani R."/>
            <person name="Kawakami T."/>
            <person name="Noguchi S."/>
            <person name="Itoh T."/>
            <person name="Shigeta K."/>
            <person name="Senba T."/>
            <person name="Matsumura K."/>
            <person name="Nakajima Y."/>
            <person name="Mizuno T."/>
            <person name="Morinaga M."/>
            <person name="Sasaki M."/>
            <person name="Togashi T."/>
            <person name="Oyama M."/>
            <person name="Hata H."/>
            <person name="Watanabe M."/>
            <person name="Komatsu T."/>
            <person name="Mizushima-Sugano J."/>
            <person name="Satoh T."/>
            <person name="Shirai Y."/>
            <person name="Takahashi Y."/>
            <person name="Nakagawa K."/>
            <person name="Okumura K."/>
            <person name="Nagase T."/>
            <person name="Nomura N."/>
            <person name="Kikuchi H."/>
            <person name="Masuho Y."/>
            <person name="Yamashita R."/>
            <person name="Nakai K."/>
            <person name="Yada T."/>
            <person name="Nakamura Y."/>
            <person name="Ohara O."/>
            <person name="Isogai T."/>
            <person name="Sugano S."/>
        </authorList>
    </citation>
    <scope>NUCLEOTIDE SEQUENCE [LARGE SCALE MRNA] (ISOFORM 2)</scope>
    <source>
        <tissue>Hippocampus</tissue>
    </source>
</reference>
<reference key="3">
    <citation type="journal article" date="2004" name="Nature">
        <title>The sequence and analysis of duplication-rich human chromosome 16.</title>
        <authorList>
            <person name="Martin J."/>
            <person name="Han C."/>
            <person name="Gordon L.A."/>
            <person name="Terry A."/>
            <person name="Prabhakar S."/>
            <person name="She X."/>
            <person name="Xie G."/>
            <person name="Hellsten U."/>
            <person name="Chan Y.M."/>
            <person name="Altherr M."/>
            <person name="Couronne O."/>
            <person name="Aerts A."/>
            <person name="Bajorek E."/>
            <person name="Black S."/>
            <person name="Blumer H."/>
            <person name="Branscomb E."/>
            <person name="Brown N.C."/>
            <person name="Bruno W.J."/>
            <person name="Buckingham J.M."/>
            <person name="Callen D.F."/>
            <person name="Campbell C.S."/>
            <person name="Campbell M.L."/>
            <person name="Campbell E.W."/>
            <person name="Caoile C."/>
            <person name="Challacombe J.F."/>
            <person name="Chasteen L.A."/>
            <person name="Chertkov O."/>
            <person name="Chi H.C."/>
            <person name="Christensen M."/>
            <person name="Clark L.M."/>
            <person name="Cohn J.D."/>
            <person name="Denys M."/>
            <person name="Detter J.C."/>
            <person name="Dickson M."/>
            <person name="Dimitrijevic-Bussod M."/>
            <person name="Escobar J."/>
            <person name="Fawcett J.J."/>
            <person name="Flowers D."/>
            <person name="Fotopulos D."/>
            <person name="Glavina T."/>
            <person name="Gomez M."/>
            <person name="Gonzales E."/>
            <person name="Goodstein D."/>
            <person name="Goodwin L.A."/>
            <person name="Grady D.L."/>
            <person name="Grigoriev I."/>
            <person name="Groza M."/>
            <person name="Hammon N."/>
            <person name="Hawkins T."/>
            <person name="Haydu L."/>
            <person name="Hildebrand C.E."/>
            <person name="Huang W."/>
            <person name="Israni S."/>
            <person name="Jett J."/>
            <person name="Jewett P.B."/>
            <person name="Kadner K."/>
            <person name="Kimball H."/>
            <person name="Kobayashi A."/>
            <person name="Krawczyk M.-C."/>
            <person name="Leyba T."/>
            <person name="Longmire J.L."/>
            <person name="Lopez F."/>
            <person name="Lou Y."/>
            <person name="Lowry S."/>
            <person name="Ludeman T."/>
            <person name="Manohar C.F."/>
            <person name="Mark G.A."/>
            <person name="McMurray K.L."/>
            <person name="Meincke L.J."/>
            <person name="Morgan J."/>
            <person name="Moyzis R.K."/>
            <person name="Mundt M.O."/>
            <person name="Munk A.C."/>
            <person name="Nandkeshwar R.D."/>
            <person name="Pitluck S."/>
            <person name="Pollard M."/>
            <person name="Predki P."/>
            <person name="Parson-Quintana B."/>
            <person name="Ramirez L."/>
            <person name="Rash S."/>
            <person name="Retterer J."/>
            <person name="Ricke D.O."/>
            <person name="Robinson D.L."/>
            <person name="Rodriguez A."/>
            <person name="Salamov A."/>
            <person name="Saunders E.H."/>
            <person name="Scott D."/>
            <person name="Shough T."/>
            <person name="Stallings R.L."/>
            <person name="Stalvey M."/>
            <person name="Sutherland R.D."/>
            <person name="Tapia R."/>
            <person name="Tesmer J.G."/>
            <person name="Thayer N."/>
            <person name="Thompson L.S."/>
            <person name="Tice H."/>
            <person name="Torney D.C."/>
            <person name="Tran-Gyamfi M."/>
            <person name="Tsai M."/>
            <person name="Ulanovsky L.E."/>
            <person name="Ustaszewska A."/>
            <person name="Vo N."/>
            <person name="White P.S."/>
            <person name="Williams A.L."/>
            <person name="Wills P.L."/>
            <person name="Wu J.-R."/>
            <person name="Wu K."/>
            <person name="Yang J."/>
            <person name="DeJong P."/>
            <person name="Bruce D."/>
            <person name="Doggett N.A."/>
            <person name="Deaven L."/>
            <person name="Schmutz J."/>
            <person name="Grimwood J."/>
            <person name="Richardson P."/>
            <person name="Rokhsar D.S."/>
            <person name="Eichler E.E."/>
            <person name="Gilna P."/>
            <person name="Lucas S.M."/>
            <person name="Myers R.M."/>
            <person name="Rubin E.M."/>
            <person name="Pennacchio L.A."/>
        </authorList>
    </citation>
    <scope>NUCLEOTIDE SEQUENCE [LARGE SCALE GENOMIC DNA]</scope>
</reference>
<reference key="4">
    <citation type="journal article" date="2004" name="Genome Res.">
        <title>The status, quality, and expansion of the NIH full-length cDNA project: the Mammalian Gene Collection (MGC).</title>
        <authorList>
            <consortium name="The MGC Project Team"/>
        </authorList>
    </citation>
    <scope>NUCLEOTIDE SEQUENCE [LARGE SCALE MRNA] (ISOFORM 1)</scope>
    <source>
        <tissue>Lung</tissue>
    </source>
</reference>
<reference key="5">
    <citation type="journal article" date="2011" name="BMC Syst. Biol.">
        <title>Initial characterization of the human central proteome.</title>
        <authorList>
            <person name="Burkard T.R."/>
            <person name="Planyavsky M."/>
            <person name="Kaupe I."/>
            <person name="Breitwieser F.P."/>
            <person name="Buerckstuemmer T."/>
            <person name="Bennett K.L."/>
            <person name="Superti-Furga G."/>
            <person name="Colinge J."/>
        </authorList>
    </citation>
    <scope>IDENTIFICATION BY MASS SPECTROMETRY [LARGE SCALE ANALYSIS]</scope>
</reference>
<reference key="6">
    <citation type="journal article" date="2015" name="J. Inherit. Metab. Dis.">
        <title>Loss of function mutation in glutamic pyruvate transaminase 2 (GPT2) causes developmental encephalopathy.</title>
        <authorList>
            <person name="Celis K."/>
            <person name="Shuldiner S."/>
            <person name="Haverfield E.V."/>
            <person name="Cappell J."/>
            <person name="Yang R."/>
            <person name="Gong D.W."/>
            <person name="Chung W.K."/>
        </authorList>
    </citation>
    <scope>INVOLVEMENT IN NEDSPM</scope>
    <scope>VARIANT NEDSPM ARG-153</scope>
    <scope>CHARACTERIZATION OF VARIANT NEDSPM ARG-153</scope>
</reference>
<reference evidence="9" key="7">
    <citation type="submission" date="2009-08" db="PDB data bank">
        <title>Human glutamate pyruvate transaminase 2.</title>
        <authorList>
            <consortium name="Structural genomics consortium (SGC)"/>
        </authorList>
    </citation>
    <scope>X-RAY CRYSTALLOGRAPHY (2.3 ANGSTROMS) OF 49-523 IN COMPLEX WITH PYRIDOXAL PHOSPHATE</scope>
    <scope>PYRIDOXAL PHOSPHATE AT LYS-341</scope>
</reference>
<feature type="chain" id="PRO_0000247532" description="Alanine aminotransferase 2">
    <location>
        <begin position="1"/>
        <end position="523"/>
    </location>
</feature>
<feature type="region of interest" description="Disordered" evidence="3">
    <location>
        <begin position="1"/>
        <end position="25"/>
    </location>
</feature>
<feature type="binding site" evidence="6 9">
    <location>
        <position position="187"/>
    </location>
    <ligand>
        <name>pyridoxal 5'-phosphate</name>
        <dbReference type="ChEBI" id="CHEBI:597326"/>
    </ligand>
</feature>
<feature type="binding site" evidence="6 9">
    <location>
        <position position="188"/>
    </location>
    <ligand>
        <name>pyridoxal 5'-phosphate</name>
        <dbReference type="ChEBI" id="CHEBI:597326"/>
    </ligand>
</feature>
<feature type="binding site" evidence="6 9">
    <location>
        <position position="216"/>
    </location>
    <ligand>
        <name>pyridoxal 5'-phosphate</name>
        <dbReference type="ChEBI" id="CHEBI:597326"/>
    </ligand>
</feature>
<feature type="binding site" evidence="6 9">
    <location>
        <position position="271"/>
    </location>
    <ligand>
        <name>pyridoxal 5'-phosphate</name>
        <dbReference type="ChEBI" id="CHEBI:597326"/>
    </ligand>
</feature>
<feature type="binding site" evidence="6 9">
    <location>
        <position position="338"/>
    </location>
    <ligand>
        <name>pyridoxal 5'-phosphate</name>
        <dbReference type="ChEBI" id="CHEBI:597326"/>
    </ligand>
</feature>
<feature type="binding site" evidence="6 9">
    <location>
        <position position="350"/>
    </location>
    <ligand>
        <name>pyridoxal 5'-phosphate</name>
        <dbReference type="ChEBI" id="CHEBI:597326"/>
    </ligand>
</feature>
<feature type="modified residue" description="N6-(pyridoxal phosphate)lysine" evidence="6 9">
    <location>
        <position position="341"/>
    </location>
</feature>
<feature type="modified residue" description="N6-acetyllysine" evidence="2">
    <location>
        <position position="415"/>
    </location>
</feature>
<feature type="modified residue" description="N6-acetyllysine" evidence="2">
    <location>
        <position position="505"/>
    </location>
</feature>
<feature type="modified residue" description="N6-acetyllysine" evidence="2">
    <location>
        <position position="512"/>
    </location>
</feature>
<feature type="splice variant" id="VSP_020008" description="In isoform 2." evidence="7">
    <location>
        <begin position="1"/>
        <end position="100"/>
    </location>
</feature>
<feature type="sequence variant" id="VAR_073379" description="In NEDSPM; loss of function mutation; dbSNP:rs786203999." evidence="5">
    <original>S</original>
    <variation>R</variation>
    <location>
        <position position="153"/>
    </location>
</feature>
<feature type="sequence conflict" description="In Ref. 4; BAC04465." evidence="8" ref="4">
    <original>D</original>
    <variation>G</variation>
    <location>
        <position position="284"/>
    </location>
</feature>
<feature type="strand" evidence="10">
    <location>
        <begin position="49"/>
        <end position="52"/>
    </location>
</feature>
<feature type="turn" evidence="10">
    <location>
        <begin position="53"/>
        <end position="56"/>
    </location>
</feature>
<feature type="strand" evidence="10">
    <location>
        <begin position="57"/>
        <end position="64"/>
    </location>
</feature>
<feature type="helix" evidence="10">
    <location>
        <begin position="67"/>
        <end position="80"/>
    </location>
</feature>
<feature type="strand" evidence="10">
    <location>
        <begin position="86"/>
        <end position="89"/>
    </location>
</feature>
<feature type="helix" evidence="10">
    <location>
        <begin position="107"/>
        <end position="117"/>
    </location>
</feature>
<feature type="helix" evidence="10">
    <location>
        <begin position="119"/>
        <end position="123"/>
    </location>
</feature>
<feature type="strand" evidence="10">
    <location>
        <begin position="125"/>
        <end position="127"/>
    </location>
</feature>
<feature type="helix" evidence="10">
    <location>
        <begin position="129"/>
        <end position="141"/>
    </location>
</feature>
<feature type="helix" evidence="10">
    <location>
        <begin position="157"/>
        <end position="170"/>
    </location>
</feature>
<feature type="turn" evidence="10">
    <location>
        <begin position="171"/>
        <end position="173"/>
    </location>
</feature>
<feature type="helix" evidence="10">
    <location>
        <begin position="178"/>
        <end position="180"/>
    </location>
</feature>
<feature type="strand" evidence="10">
    <location>
        <begin position="181"/>
        <end position="186"/>
    </location>
</feature>
<feature type="helix" evidence="10">
    <location>
        <begin position="187"/>
        <end position="198"/>
    </location>
</feature>
<feature type="helix" evidence="10">
    <location>
        <begin position="203"/>
        <end position="205"/>
    </location>
</feature>
<feature type="strand" evidence="10">
    <location>
        <begin position="206"/>
        <end position="214"/>
    </location>
</feature>
<feature type="helix" evidence="10">
    <location>
        <begin position="218"/>
        <end position="225"/>
    </location>
</feature>
<feature type="strand" evidence="10">
    <location>
        <begin position="229"/>
        <end position="234"/>
    </location>
</feature>
<feature type="helix" evidence="10">
    <location>
        <begin position="237"/>
        <end position="239"/>
    </location>
</feature>
<feature type="helix" evidence="10">
    <location>
        <begin position="245"/>
        <end position="255"/>
    </location>
</feature>
<feature type="turn" evidence="10">
    <location>
        <begin position="256"/>
        <end position="258"/>
    </location>
</feature>
<feature type="strand" evidence="10">
    <location>
        <begin position="259"/>
        <end position="269"/>
    </location>
</feature>
<feature type="turn" evidence="10">
    <location>
        <begin position="271"/>
        <end position="273"/>
    </location>
</feature>
<feature type="helix" evidence="10">
    <location>
        <begin position="279"/>
        <end position="292"/>
    </location>
</feature>
<feature type="strand" evidence="10">
    <location>
        <begin position="295"/>
        <end position="299"/>
    </location>
</feature>
<feature type="turn" evidence="10">
    <location>
        <begin position="301"/>
        <end position="304"/>
    </location>
</feature>
<feature type="helix" evidence="10">
    <location>
        <begin position="316"/>
        <end position="322"/>
    </location>
</feature>
<feature type="helix" evidence="10">
    <location>
        <begin position="325"/>
        <end position="328"/>
    </location>
</feature>
<feature type="strand" evidence="10">
    <location>
        <begin position="333"/>
        <end position="342"/>
    </location>
</feature>
<feature type="strand" evidence="10">
    <location>
        <begin position="347"/>
        <end position="349"/>
    </location>
</feature>
<feature type="strand" evidence="10">
    <location>
        <begin position="352"/>
        <end position="358"/>
    </location>
</feature>
<feature type="helix" evidence="10">
    <location>
        <begin position="361"/>
        <end position="373"/>
    </location>
</feature>
<feature type="helix" evidence="10">
    <location>
        <begin position="379"/>
        <end position="388"/>
    </location>
</feature>
<feature type="helix" evidence="10">
    <location>
        <begin position="399"/>
        <end position="425"/>
    </location>
</feature>
<feature type="strand" evidence="10">
    <location>
        <begin position="437"/>
        <end position="441"/>
    </location>
</feature>
<feature type="helix" evidence="10">
    <location>
        <begin position="449"/>
        <end position="457"/>
    </location>
</feature>
<feature type="helix" evidence="10">
    <location>
        <begin position="462"/>
        <end position="474"/>
    </location>
</feature>
<feature type="helix" evidence="10">
    <location>
        <begin position="481"/>
        <end position="483"/>
    </location>
</feature>
<feature type="strand" evidence="10">
    <location>
        <begin position="492"/>
        <end position="496"/>
    </location>
</feature>
<feature type="helix" evidence="10">
    <location>
        <begin position="501"/>
        <end position="521"/>
    </location>
</feature>
<comment type="function">
    <text evidence="4">Catalyzes the reversible transamination between alanine and 2-oxoglutarate to form pyruvate and glutamate.</text>
</comment>
<comment type="catalytic activity">
    <reaction evidence="4">
        <text>L-alanine + 2-oxoglutarate = pyruvate + L-glutamate</text>
        <dbReference type="Rhea" id="RHEA:19453"/>
        <dbReference type="ChEBI" id="CHEBI:15361"/>
        <dbReference type="ChEBI" id="CHEBI:16810"/>
        <dbReference type="ChEBI" id="CHEBI:29985"/>
        <dbReference type="ChEBI" id="CHEBI:57972"/>
        <dbReference type="EC" id="2.6.1.2"/>
    </reaction>
</comment>
<comment type="cofactor">
    <cofactor evidence="6">
        <name>pyridoxal 5'-phosphate</name>
        <dbReference type="ChEBI" id="CHEBI:597326"/>
    </cofactor>
</comment>
<comment type="pathway">
    <text>Amino-acid degradation; L-alanine degradation via transaminase pathway; pyruvate from L-alanine: step 1/1.</text>
</comment>
<comment type="subunit">
    <text evidence="1">Homodimer.</text>
</comment>
<comment type="alternative products">
    <event type="alternative splicing"/>
    <isoform>
        <id>Q8TD30-1</id>
        <name>1</name>
        <sequence type="displayed"/>
    </isoform>
    <isoform>
        <id>Q8TD30-2</id>
        <name>2</name>
        <sequence type="described" ref="VSP_020008"/>
    </isoform>
</comment>
<comment type="tissue specificity">
    <text evidence="4">Expressed at high levels in muscle, adipose tissue, kidney and brain and at lower levels in the liver and breast.</text>
</comment>
<comment type="disease" evidence="5">
    <disease id="DI-04363">
        <name>Neurodevelopmental disorder with spastic paraplegia and microcephaly</name>
        <acronym>NEDSPM</acronym>
        <description>An autosomal recessive syndrome characterized by severe psychomotor developmental delay, dysarthria, walking difficulties, moderately to severely impaired intellectual development, poor or absent speech, and progressive microcephaly.</description>
        <dbReference type="MIM" id="616281"/>
    </disease>
    <text>The disease is caused by variants affecting the gene represented in this entry.</text>
</comment>
<comment type="similarity">
    <text evidence="8">Belongs to the class-I pyridoxal-phosphate-dependent aminotransferase family. Alanine aminotransferase subfamily.</text>
</comment>
<proteinExistence type="evidence at protein level"/>
<sequence length="523" mass="57904">MQRAAALVRRGCGPRTPSSWGRSQSSAAAEASAVLKVRPERSRRERILTLESMNPQVKAVEYAVRGPIVLKAGEIELELQRGIKKPFTEVIRANIGDAQAMGQQPITFLRQVMALCTYPNLLDSPSFPEDAKKRARRILQACGGNSLGSYSASQGVNCIREDVAAYITRRDGGVPADPDNIYLTTGASDGISTILKILVSGGGKSRTGVMIPIPQYPLYSAVISELDAIQVNYYLDEENCWALNVNELRRAVQEAKDHCDPKVLCIINPGNPTGQVQSRKCIEDVIHFAWEEKLFLLADEVYQDNVYSPDCRFHSFKKVLYEMGPEYSSNVELASFHSTSKGYMGECGYRGGYMEVINLHPEIKGQLVKLLSVRLCPPVSGQAAMDIVVNPPVAGEESFEQFSREKESVLGNLAKKAKLTEDLFNQVPGIHCNPLQGAMYAFPRIFIPAKAVEAAQAHQMAPDMFYCMKLLEETGICVVPGSGFGQREGTYHFRMTILPPVEKLKTVLQKVKDFHINFLEKYA</sequence>
<protein>
    <recommendedName>
        <fullName>Alanine aminotransferase 2</fullName>
        <shortName>ALT2</shortName>
        <ecNumber>2.6.1.2</ecNumber>
    </recommendedName>
    <alternativeName>
        <fullName>Glutamate pyruvate transaminase 2</fullName>
        <shortName>GPT 2</shortName>
    </alternativeName>
    <alternativeName>
        <fullName>Glutamic--alanine transaminase 2</fullName>
    </alternativeName>
    <alternativeName>
        <fullName>Glutamic--pyruvic transaminase 2</fullName>
    </alternativeName>
</protein>
<gene>
    <name type="primary">GPT2</name>
    <name type="synonym">AAT2</name>
    <name type="synonym">ALT2</name>
</gene>
<accession>Q8TD30</accession>
<accession>Q8N9E2</accession>